<accession>Q01NJ5</accession>
<gene>
    <name evidence="1" type="primary">murB</name>
    <name type="ordered locus">Acid_7881</name>
</gene>
<name>MURB_SOLUE</name>
<reference key="1">
    <citation type="journal article" date="2009" name="Appl. Environ. Microbiol.">
        <title>Three genomes from the phylum Acidobacteria provide insight into the lifestyles of these microorganisms in soils.</title>
        <authorList>
            <person name="Ward N.L."/>
            <person name="Challacombe J.F."/>
            <person name="Janssen P.H."/>
            <person name="Henrissat B."/>
            <person name="Coutinho P.M."/>
            <person name="Wu M."/>
            <person name="Xie G."/>
            <person name="Haft D.H."/>
            <person name="Sait M."/>
            <person name="Badger J."/>
            <person name="Barabote R.D."/>
            <person name="Bradley B."/>
            <person name="Brettin T.S."/>
            <person name="Brinkac L.M."/>
            <person name="Bruce D."/>
            <person name="Creasy T."/>
            <person name="Daugherty S.C."/>
            <person name="Davidsen T.M."/>
            <person name="DeBoy R.T."/>
            <person name="Detter J.C."/>
            <person name="Dodson R.J."/>
            <person name="Durkin A.S."/>
            <person name="Ganapathy A."/>
            <person name="Gwinn-Giglio M."/>
            <person name="Han C.S."/>
            <person name="Khouri H."/>
            <person name="Kiss H."/>
            <person name="Kothari S.P."/>
            <person name="Madupu R."/>
            <person name="Nelson K.E."/>
            <person name="Nelson W.C."/>
            <person name="Paulsen I."/>
            <person name="Penn K."/>
            <person name="Ren Q."/>
            <person name="Rosovitz M.J."/>
            <person name="Selengut J.D."/>
            <person name="Shrivastava S."/>
            <person name="Sullivan S.A."/>
            <person name="Tapia R."/>
            <person name="Thompson L.S."/>
            <person name="Watkins K.L."/>
            <person name="Yang Q."/>
            <person name="Yu C."/>
            <person name="Zafar N."/>
            <person name="Zhou L."/>
            <person name="Kuske C.R."/>
        </authorList>
    </citation>
    <scope>NUCLEOTIDE SEQUENCE [LARGE SCALE GENOMIC DNA]</scope>
    <source>
        <strain>Ellin6076</strain>
    </source>
</reference>
<evidence type="ECO:0000255" key="1">
    <source>
        <dbReference type="HAMAP-Rule" id="MF_00037"/>
    </source>
</evidence>
<dbReference type="EC" id="1.3.1.98" evidence="1"/>
<dbReference type="EMBL" id="CP000473">
    <property type="protein sequence ID" value="ABJ88775.1"/>
    <property type="molecule type" value="Genomic_DNA"/>
</dbReference>
<dbReference type="SMR" id="Q01NJ5"/>
<dbReference type="FunCoup" id="Q01NJ5">
    <property type="interactions" value="543"/>
</dbReference>
<dbReference type="STRING" id="234267.Acid_7881"/>
<dbReference type="KEGG" id="sus:Acid_7881"/>
<dbReference type="eggNOG" id="COG0812">
    <property type="taxonomic scope" value="Bacteria"/>
</dbReference>
<dbReference type="HOGENOM" id="CLU_035304_1_1_0"/>
<dbReference type="InParanoid" id="Q01NJ5"/>
<dbReference type="OrthoDB" id="9804753at2"/>
<dbReference type="UniPathway" id="UPA00219"/>
<dbReference type="GO" id="GO:0005829">
    <property type="term" value="C:cytosol"/>
    <property type="evidence" value="ECO:0007669"/>
    <property type="project" value="TreeGrafter"/>
</dbReference>
<dbReference type="GO" id="GO:0071949">
    <property type="term" value="F:FAD binding"/>
    <property type="evidence" value="ECO:0007669"/>
    <property type="project" value="InterPro"/>
</dbReference>
<dbReference type="GO" id="GO:0008762">
    <property type="term" value="F:UDP-N-acetylmuramate dehydrogenase activity"/>
    <property type="evidence" value="ECO:0007669"/>
    <property type="project" value="UniProtKB-UniRule"/>
</dbReference>
<dbReference type="GO" id="GO:0051301">
    <property type="term" value="P:cell division"/>
    <property type="evidence" value="ECO:0007669"/>
    <property type="project" value="UniProtKB-KW"/>
</dbReference>
<dbReference type="GO" id="GO:0071555">
    <property type="term" value="P:cell wall organization"/>
    <property type="evidence" value="ECO:0007669"/>
    <property type="project" value="UniProtKB-KW"/>
</dbReference>
<dbReference type="GO" id="GO:0009252">
    <property type="term" value="P:peptidoglycan biosynthetic process"/>
    <property type="evidence" value="ECO:0007669"/>
    <property type="project" value="UniProtKB-UniRule"/>
</dbReference>
<dbReference type="GO" id="GO:0008360">
    <property type="term" value="P:regulation of cell shape"/>
    <property type="evidence" value="ECO:0007669"/>
    <property type="project" value="UniProtKB-KW"/>
</dbReference>
<dbReference type="Gene3D" id="3.30.465.10">
    <property type="match status" value="1"/>
</dbReference>
<dbReference type="Gene3D" id="3.90.78.10">
    <property type="entry name" value="UDP-N-acetylenolpyruvoylglucosamine reductase, C-terminal domain"/>
    <property type="match status" value="1"/>
</dbReference>
<dbReference type="Gene3D" id="3.30.43.10">
    <property type="entry name" value="Uridine Diphospho-n-acetylenolpyruvylglucosamine Reductase, domain 2"/>
    <property type="match status" value="1"/>
</dbReference>
<dbReference type="HAMAP" id="MF_00037">
    <property type="entry name" value="MurB"/>
    <property type="match status" value="1"/>
</dbReference>
<dbReference type="InterPro" id="IPR016166">
    <property type="entry name" value="FAD-bd_PCMH"/>
</dbReference>
<dbReference type="InterPro" id="IPR036318">
    <property type="entry name" value="FAD-bd_PCMH-like_sf"/>
</dbReference>
<dbReference type="InterPro" id="IPR016167">
    <property type="entry name" value="FAD-bd_PCMH_sub1"/>
</dbReference>
<dbReference type="InterPro" id="IPR016169">
    <property type="entry name" value="FAD-bd_PCMH_sub2"/>
</dbReference>
<dbReference type="InterPro" id="IPR003170">
    <property type="entry name" value="MurB"/>
</dbReference>
<dbReference type="InterPro" id="IPR011601">
    <property type="entry name" value="MurB_C"/>
</dbReference>
<dbReference type="InterPro" id="IPR036635">
    <property type="entry name" value="MurB_C_sf"/>
</dbReference>
<dbReference type="InterPro" id="IPR006094">
    <property type="entry name" value="Oxid_FAD_bind_N"/>
</dbReference>
<dbReference type="NCBIfam" id="TIGR00179">
    <property type="entry name" value="murB"/>
    <property type="match status" value="1"/>
</dbReference>
<dbReference type="PANTHER" id="PTHR21071">
    <property type="entry name" value="UDP-N-ACETYLENOLPYRUVOYLGLUCOSAMINE REDUCTASE"/>
    <property type="match status" value="1"/>
</dbReference>
<dbReference type="PANTHER" id="PTHR21071:SF4">
    <property type="entry name" value="UDP-N-ACETYLENOLPYRUVOYLGLUCOSAMINE REDUCTASE"/>
    <property type="match status" value="1"/>
</dbReference>
<dbReference type="Pfam" id="PF01565">
    <property type="entry name" value="FAD_binding_4"/>
    <property type="match status" value="1"/>
</dbReference>
<dbReference type="Pfam" id="PF02873">
    <property type="entry name" value="MurB_C"/>
    <property type="match status" value="1"/>
</dbReference>
<dbReference type="SUPFAM" id="SSF56176">
    <property type="entry name" value="FAD-binding/transporter-associated domain-like"/>
    <property type="match status" value="1"/>
</dbReference>
<dbReference type="SUPFAM" id="SSF56194">
    <property type="entry name" value="Uridine diphospho-N-Acetylenolpyruvylglucosamine reductase, MurB, C-terminal domain"/>
    <property type="match status" value="1"/>
</dbReference>
<dbReference type="PROSITE" id="PS51387">
    <property type="entry name" value="FAD_PCMH"/>
    <property type="match status" value="1"/>
</dbReference>
<protein>
    <recommendedName>
        <fullName evidence="1">UDP-N-acetylenolpyruvoylglucosamine reductase</fullName>
        <ecNumber evidence="1">1.3.1.98</ecNumber>
    </recommendedName>
    <alternativeName>
        <fullName evidence="1">UDP-N-acetylmuramate dehydrogenase</fullName>
    </alternativeName>
</protein>
<keyword id="KW-0131">Cell cycle</keyword>
<keyword id="KW-0132">Cell division</keyword>
<keyword id="KW-0133">Cell shape</keyword>
<keyword id="KW-0961">Cell wall biogenesis/degradation</keyword>
<keyword id="KW-0963">Cytoplasm</keyword>
<keyword id="KW-0274">FAD</keyword>
<keyword id="KW-0285">Flavoprotein</keyword>
<keyword id="KW-0521">NADP</keyword>
<keyword id="KW-0560">Oxidoreductase</keyword>
<keyword id="KW-0573">Peptidoglycan synthesis</keyword>
<feature type="chain" id="PRO_0000332506" description="UDP-N-acetylenolpyruvoylglucosamine reductase">
    <location>
        <begin position="1"/>
        <end position="312"/>
    </location>
</feature>
<feature type="domain" description="FAD-binding PCMH-type" evidence="1">
    <location>
        <begin position="24"/>
        <end position="206"/>
    </location>
</feature>
<feature type="active site" evidence="1">
    <location>
        <position position="166"/>
    </location>
</feature>
<feature type="active site" description="Proton donor" evidence="1">
    <location>
        <position position="217"/>
    </location>
</feature>
<feature type="active site" evidence="1">
    <location>
        <position position="307"/>
    </location>
</feature>
<proteinExistence type="inferred from homology"/>
<comment type="function">
    <text evidence="1">Cell wall formation.</text>
</comment>
<comment type="catalytic activity">
    <reaction evidence="1">
        <text>UDP-N-acetyl-alpha-D-muramate + NADP(+) = UDP-N-acetyl-3-O-(1-carboxyvinyl)-alpha-D-glucosamine + NADPH + H(+)</text>
        <dbReference type="Rhea" id="RHEA:12248"/>
        <dbReference type="ChEBI" id="CHEBI:15378"/>
        <dbReference type="ChEBI" id="CHEBI:57783"/>
        <dbReference type="ChEBI" id="CHEBI:58349"/>
        <dbReference type="ChEBI" id="CHEBI:68483"/>
        <dbReference type="ChEBI" id="CHEBI:70757"/>
        <dbReference type="EC" id="1.3.1.98"/>
    </reaction>
</comment>
<comment type="cofactor">
    <cofactor evidence="1">
        <name>FAD</name>
        <dbReference type="ChEBI" id="CHEBI:57692"/>
    </cofactor>
</comment>
<comment type="pathway">
    <text evidence="1">Cell wall biogenesis; peptidoglycan biosynthesis.</text>
</comment>
<comment type="subcellular location">
    <subcellularLocation>
        <location evidence="1">Cytoplasm</location>
    </subcellularLocation>
</comment>
<comment type="similarity">
    <text evidence="1">Belongs to the MurB family.</text>
</comment>
<sequence>MRLAGIPNLAVSASTPLSLYTRFGIGGPADLFAETRDEGAFMAAIAAARESGTAVMVTGGGTNLIVSDAGFRGLVVRFADDTLSAEAERVTAGAGAVLQDLIDFANHRGLKGLETLAGIPGWVGAAVYGNAGAYGHSISERVRAVRFFDGSAVRIFDHAQCEFAYRESIFKRHKDWIIFSAELVMDAGEAGELERTSADILKVRNEKFPPTMKCAGSIFKNFLITELPPPVAGLVPANVVREGKVPAAWFLEQVGAKGMRFGGIRVADYHANLIYNAGEGTARELCAVIAELKGRVRERFGIEVEEEVQYVG</sequence>
<organism>
    <name type="scientific">Solibacter usitatus (strain Ellin6076)</name>
    <dbReference type="NCBI Taxonomy" id="234267"/>
    <lineage>
        <taxon>Bacteria</taxon>
        <taxon>Pseudomonadati</taxon>
        <taxon>Acidobacteriota</taxon>
        <taxon>Terriglobia</taxon>
        <taxon>Bryobacterales</taxon>
        <taxon>Solibacteraceae</taxon>
        <taxon>Candidatus Solibacter</taxon>
    </lineage>
</organism>